<organism>
    <name type="scientific">Psittacid herpesvirus 1 (isolate Amazon parrot/-/97-0001/1997)</name>
    <name type="common">PsHV-1</name>
    <name type="synonym">Pacheco's disease virus</name>
    <dbReference type="NCBI Taxonomy" id="670426"/>
    <lineage>
        <taxon>Viruses</taxon>
        <taxon>Duplodnaviria</taxon>
        <taxon>Heunggongvirae</taxon>
        <taxon>Peploviricota</taxon>
        <taxon>Herviviricetes</taxon>
        <taxon>Herpesvirales</taxon>
        <taxon>Orthoherpesviridae</taxon>
        <taxon>Alphaherpesvirinae</taxon>
        <taxon>Iltovirus</taxon>
        <taxon>Iltovirus psittacidalpha1</taxon>
        <taxon>Psittacid alphaherpesvirus 1</taxon>
    </lineage>
</organism>
<gene>
    <name evidence="1" type="primary">NEC1</name>
    <name type="ordered locus">UL31</name>
</gene>
<sequence length="345" mass="38521">MSDVALKRNSSFFRAKARLTLLKRRDGGVISRSLEHRRSSRRRSSVSAPTRRVSGTLAKLGADDRRQFFDAFFRMTAVSPEETVSLLRSMTVPVIQQENISLPYDINAKFAPGDCISLSEMGYTLEMGGCCSLCSYGWSTTTPPELPALELAFMHHLSSVVEFKELVTSLRVCAGNSIVGNGAYENEGLLRMIKHLLEQSTLFYAYYTVKGGVSHDFRVLISEDGGGDGGSPAYAMYFVFKPGSPLHLGAKLIRQLIFNCPGYKWHADVHEGAFLLVVTRDRCSAIPEPRRVKLDPEDVYRRYCDVLVTEEKVHDYSRLYSTFSTYCPPASRREQTAAPATAKQV</sequence>
<dbReference type="EMBL" id="AY372243">
    <property type="protein sequence ID" value="AAQ73710.1"/>
    <property type="molecule type" value="Genomic_DNA"/>
</dbReference>
<dbReference type="RefSeq" id="NP_944404.1">
    <property type="nucleotide sequence ID" value="NC_005264.1"/>
</dbReference>
<dbReference type="SMR" id="Q6UDK0"/>
<dbReference type="GeneID" id="2656985"/>
<dbReference type="KEGG" id="vg:2656985"/>
<dbReference type="Proteomes" id="UP000006840">
    <property type="component" value="Segment"/>
</dbReference>
<dbReference type="GO" id="GO:0044201">
    <property type="term" value="C:host cell nuclear inner membrane"/>
    <property type="evidence" value="ECO:0007669"/>
    <property type="project" value="UniProtKB-SubCell"/>
</dbReference>
<dbReference type="GO" id="GO:0016020">
    <property type="term" value="C:membrane"/>
    <property type="evidence" value="ECO:0007669"/>
    <property type="project" value="UniProtKB-KW"/>
</dbReference>
<dbReference type="GO" id="GO:0008270">
    <property type="term" value="F:zinc ion binding"/>
    <property type="evidence" value="ECO:0007669"/>
    <property type="project" value="UniProtKB-KW"/>
</dbReference>
<dbReference type="GO" id="GO:0046765">
    <property type="term" value="P:viral budding from nuclear membrane"/>
    <property type="evidence" value="ECO:0007669"/>
    <property type="project" value="InterPro"/>
</dbReference>
<dbReference type="HAMAP" id="MF_04023">
    <property type="entry name" value="HSV_NEC1"/>
    <property type="match status" value="1"/>
</dbReference>
<dbReference type="InterPro" id="IPR021152">
    <property type="entry name" value="Herpes_UL31"/>
</dbReference>
<dbReference type="Pfam" id="PF02718">
    <property type="entry name" value="Herpes_UL31"/>
    <property type="match status" value="1"/>
</dbReference>
<reference key="1">
    <citation type="journal article" date="2006" name="J. Virol.">
        <title>Psittacid herpesvirus 1 and infectious laryngotracheitis virus: Comparative genome sequence analysis of two avian alphaherpesviruses.</title>
        <authorList>
            <person name="Thureen D.R."/>
            <person name="Keeler C.L. Jr."/>
        </authorList>
    </citation>
    <scope>NUCLEOTIDE SEQUENCE [LARGE SCALE GENOMIC DNA]</scope>
</reference>
<proteinExistence type="inferred from homology"/>
<feature type="chain" id="PRO_0000406849" description="Nuclear egress protein 1">
    <location>
        <begin position="1"/>
        <end position="345"/>
    </location>
</feature>
<feature type="zinc finger region" description="CCCH-type" evidence="1">
    <location>
        <begin position="115"/>
        <end position="247"/>
    </location>
</feature>
<organismHost>
    <name type="scientific">Amazona oratrix</name>
    <name type="common">yellow-headed parrot</name>
    <dbReference type="NCBI Taxonomy" id="152276"/>
</organismHost>
<protein>
    <recommendedName>
        <fullName evidence="1">Nuclear egress protein 1</fullName>
    </recommendedName>
</protein>
<evidence type="ECO:0000255" key="1">
    <source>
        <dbReference type="HAMAP-Rule" id="MF_04023"/>
    </source>
</evidence>
<comment type="function">
    <text evidence="1">Plays an essential role in virion nuclear egress, the first step of virion release from infected cell. Within the host nucleus, NEC1 interacts with the newly formed capsid through the vertexes and directs it to the inner nuclear membrane by associating with NEC2. Induces the budding of the capsid at the inner nuclear membrane as well as its envelopment into the perinuclear space. There, the NEC1/NEC2 complex promotes the fusion of the enveloped capsid with the outer nuclear membrane and the subsequent release of the viral capsid into the cytoplasm where it will reach the secondary budding sites in the host Golgi or trans-Golgi network.</text>
</comment>
<comment type="subunit">
    <text evidence="1">Forms a heterohexameric complex with NEC2. Interacts with capsid vertex specific component 2/CVC2; this interaction directs the capsid to the host inner nuclear membrane to initiate budding.</text>
</comment>
<comment type="subcellular location">
    <subcellularLocation>
        <location evidence="1">Host nucleus inner membrane</location>
    </subcellularLocation>
    <text evidence="1">Remains attached to the nucleus inner membrane through interaction with NEC2.</text>
</comment>
<comment type="PTM">
    <text evidence="1">Phosphorylated at serine residues in the N-terminus. This phosphorylation regulates the localization within the inner nuclear membrane.</text>
</comment>
<comment type="similarity">
    <text evidence="1">Belongs to the herpesviridae NEC1 protein family.</text>
</comment>
<name>NEC1_PSHV1</name>
<accession>Q6UDK0</accession>
<keyword id="KW-1043">Host membrane</keyword>
<keyword id="KW-1048">Host nucleus</keyword>
<keyword id="KW-0472">Membrane</keyword>
<keyword id="KW-0479">Metal-binding</keyword>
<keyword id="KW-0597">Phosphoprotein</keyword>
<keyword id="KW-1185">Reference proteome</keyword>
<keyword id="KW-0862">Zinc</keyword>
<keyword id="KW-0863">Zinc-finger</keyword>